<dbReference type="EMBL" id="AE000782">
    <property type="protein sequence ID" value="AAB90644.1"/>
    <property type="molecule type" value="Genomic_DNA"/>
</dbReference>
<dbReference type="PIR" id="C69325">
    <property type="entry name" value="C69325"/>
</dbReference>
<dbReference type="STRING" id="224325.AF_0603"/>
<dbReference type="PaxDb" id="224325-AF_0603"/>
<dbReference type="EnsemblBacteria" id="AAB90644">
    <property type="protein sequence ID" value="AAB90644"/>
    <property type="gene ID" value="AF_0603"/>
</dbReference>
<dbReference type="KEGG" id="afu:AF_0603"/>
<dbReference type="HOGENOM" id="CLU_3394419_0_0_2"/>
<dbReference type="Proteomes" id="UP000002199">
    <property type="component" value="Chromosome"/>
</dbReference>
<feature type="chain" id="PRO_0000127894" description="Uncharacterized protein AF_0603">
    <location>
        <begin position="1"/>
        <end position="31"/>
    </location>
</feature>
<sequence length="31" mass="3945">MTITEKFYDKELKRIVEDVFRFEIEMHGYEF</sequence>
<name>Y603_ARCFU</name>
<proteinExistence type="predicted"/>
<accession>O29652</accession>
<keyword id="KW-1185">Reference proteome</keyword>
<organism>
    <name type="scientific">Archaeoglobus fulgidus (strain ATCC 49558 / DSM 4304 / JCM 9628 / NBRC 100126 / VC-16)</name>
    <dbReference type="NCBI Taxonomy" id="224325"/>
    <lineage>
        <taxon>Archaea</taxon>
        <taxon>Methanobacteriati</taxon>
        <taxon>Methanobacteriota</taxon>
        <taxon>Archaeoglobi</taxon>
        <taxon>Archaeoglobales</taxon>
        <taxon>Archaeoglobaceae</taxon>
        <taxon>Archaeoglobus</taxon>
    </lineage>
</organism>
<reference key="1">
    <citation type="journal article" date="1997" name="Nature">
        <title>The complete genome sequence of the hyperthermophilic, sulphate-reducing archaeon Archaeoglobus fulgidus.</title>
        <authorList>
            <person name="Klenk H.-P."/>
            <person name="Clayton R.A."/>
            <person name="Tomb J.-F."/>
            <person name="White O."/>
            <person name="Nelson K.E."/>
            <person name="Ketchum K.A."/>
            <person name="Dodson R.J."/>
            <person name="Gwinn M.L."/>
            <person name="Hickey E.K."/>
            <person name="Peterson J.D."/>
            <person name="Richardson D.L."/>
            <person name="Kerlavage A.R."/>
            <person name="Graham D.E."/>
            <person name="Kyrpides N.C."/>
            <person name="Fleischmann R.D."/>
            <person name="Quackenbush J."/>
            <person name="Lee N.H."/>
            <person name="Sutton G.G."/>
            <person name="Gill S.R."/>
            <person name="Kirkness E.F."/>
            <person name="Dougherty B.A."/>
            <person name="McKenney K."/>
            <person name="Adams M.D."/>
            <person name="Loftus B.J."/>
            <person name="Peterson S.N."/>
            <person name="Reich C.I."/>
            <person name="McNeil L.K."/>
            <person name="Badger J.H."/>
            <person name="Glodek A."/>
            <person name="Zhou L."/>
            <person name="Overbeek R."/>
            <person name="Gocayne J.D."/>
            <person name="Weidman J.F."/>
            <person name="McDonald L.A."/>
            <person name="Utterback T.R."/>
            <person name="Cotton M.D."/>
            <person name="Spriggs T."/>
            <person name="Artiach P."/>
            <person name="Kaine B.P."/>
            <person name="Sykes S.M."/>
            <person name="Sadow P.W."/>
            <person name="D'Andrea K.P."/>
            <person name="Bowman C."/>
            <person name="Fujii C."/>
            <person name="Garland S.A."/>
            <person name="Mason T.M."/>
            <person name="Olsen G.J."/>
            <person name="Fraser C.M."/>
            <person name="Smith H.O."/>
            <person name="Woese C.R."/>
            <person name="Venter J.C."/>
        </authorList>
    </citation>
    <scope>NUCLEOTIDE SEQUENCE [LARGE SCALE GENOMIC DNA]</scope>
    <source>
        <strain>ATCC 49558 / DSM 4304 / JCM 9628 / NBRC 100126 / VC-16</strain>
    </source>
</reference>
<gene>
    <name type="ordered locus">AF_0603</name>
</gene>
<protein>
    <recommendedName>
        <fullName>Uncharacterized protein AF_0603</fullName>
    </recommendedName>
</protein>